<organism>
    <name type="scientific">Mannheimia succiniciproducens (strain KCTC 0769BP / MBEL55E)</name>
    <dbReference type="NCBI Taxonomy" id="221988"/>
    <lineage>
        <taxon>Bacteria</taxon>
        <taxon>Pseudomonadati</taxon>
        <taxon>Pseudomonadota</taxon>
        <taxon>Gammaproteobacteria</taxon>
        <taxon>Pasteurellales</taxon>
        <taxon>Pasteurellaceae</taxon>
        <taxon>Basfia</taxon>
    </lineage>
</organism>
<gene>
    <name evidence="1" type="primary">rimK</name>
    <name type="ordered locus">MS0757</name>
</gene>
<evidence type="ECO:0000255" key="1">
    <source>
        <dbReference type="HAMAP-Rule" id="MF_01552"/>
    </source>
</evidence>
<name>RIMK_MANSM</name>
<keyword id="KW-0067">ATP-binding</keyword>
<keyword id="KW-0436">Ligase</keyword>
<keyword id="KW-0460">Magnesium</keyword>
<keyword id="KW-0464">Manganese</keyword>
<keyword id="KW-0479">Metal-binding</keyword>
<keyword id="KW-0547">Nucleotide-binding</keyword>
<keyword id="KW-0648">Protein biosynthesis</keyword>
<protein>
    <recommendedName>
        <fullName evidence="1">Probable alpha-L-glutamate ligase</fullName>
        <ecNumber evidence="1">6.3.2.-</ecNumber>
    </recommendedName>
</protein>
<reference key="1">
    <citation type="journal article" date="2004" name="Nat. Biotechnol.">
        <title>The genome sequence of the capnophilic rumen bacterium Mannheimia succiniciproducens.</title>
        <authorList>
            <person name="Hong S.H."/>
            <person name="Kim J.S."/>
            <person name="Lee S.Y."/>
            <person name="In Y.H."/>
            <person name="Choi S.S."/>
            <person name="Rih J.-K."/>
            <person name="Kim C.H."/>
            <person name="Jeong H."/>
            <person name="Hur C.G."/>
            <person name="Kim J.J."/>
        </authorList>
    </citation>
    <scope>NUCLEOTIDE SEQUENCE [LARGE SCALE GENOMIC DNA]</scope>
    <source>
        <strain>KCTC 0769BP / MBEL55E</strain>
    </source>
</reference>
<accession>Q65UJ6</accession>
<comment type="cofactor">
    <cofactor evidence="1">
        <name>Mg(2+)</name>
        <dbReference type="ChEBI" id="CHEBI:18420"/>
    </cofactor>
    <cofactor evidence="1">
        <name>Mn(2+)</name>
        <dbReference type="ChEBI" id="CHEBI:29035"/>
    </cofactor>
    <text evidence="1">Binds 2 magnesium or manganese ions per subunit.</text>
</comment>
<comment type="similarity">
    <text evidence="1">Belongs to the RimK family.</text>
</comment>
<feature type="chain" id="PRO_0000205465" description="Probable alpha-L-glutamate ligase">
    <location>
        <begin position="1"/>
        <end position="299"/>
    </location>
</feature>
<feature type="domain" description="ATP-grasp" evidence="1">
    <location>
        <begin position="111"/>
        <end position="293"/>
    </location>
</feature>
<feature type="binding site" evidence="1">
    <location>
        <position position="147"/>
    </location>
    <ligand>
        <name>ATP</name>
        <dbReference type="ChEBI" id="CHEBI:30616"/>
    </ligand>
</feature>
<feature type="binding site" evidence="1">
    <location>
        <begin position="184"/>
        <end position="185"/>
    </location>
    <ligand>
        <name>ATP</name>
        <dbReference type="ChEBI" id="CHEBI:30616"/>
    </ligand>
</feature>
<feature type="binding site" evidence="1">
    <location>
        <position position="193"/>
    </location>
    <ligand>
        <name>ATP</name>
        <dbReference type="ChEBI" id="CHEBI:30616"/>
    </ligand>
</feature>
<feature type="binding site" evidence="1">
    <location>
        <begin position="217"/>
        <end position="219"/>
    </location>
    <ligand>
        <name>ATP</name>
        <dbReference type="ChEBI" id="CHEBI:30616"/>
    </ligand>
</feature>
<feature type="binding site" evidence="1">
    <location>
        <position position="254"/>
    </location>
    <ligand>
        <name>Mg(2+)</name>
        <dbReference type="ChEBI" id="CHEBI:18420"/>
        <label>1</label>
    </ligand>
</feature>
<feature type="binding site" evidence="1">
    <location>
        <position position="254"/>
    </location>
    <ligand>
        <name>Mn(2+)</name>
        <dbReference type="ChEBI" id="CHEBI:29035"/>
        <label>1</label>
    </ligand>
</feature>
<feature type="binding site" evidence="1">
    <location>
        <position position="266"/>
    </location>
    <ligand>
        <name>Mg(2+)</name>
        <dbReference type="ChEBI" id="CHEBI:18420"/>
        <label>1</label>
    </ligand>
</feature>
<feature type="binding site" evidence="1">
    <location>
        <position position="266"/>
    </location>
    <ligand>
        <name>Mg(2+)</name>
        <dbReference type="ChEBI" id="CHEBI:18420"/>
        <label>2</label>
    </ligand>
</feature>
<feature type="binding site" evidence="1">
    <location>
        <position position="266"/>
    </location>
    <ligand>
        <name>Mn(2+)</name>
        <dbReference type="ChEBI" id="CHEBI:29035"/>
        <label>1</label>
    </ligand>
</feature>
<feature type="binding site" evidence="1">
    <location>
        <position position="266"/>
    </location>
    <ligand>
        <name>Mn(2+)</name>
        <dbReference type="ChEBI" id="CHEBI:29035"/>
        <label>2</label>
    </ligand>
</feature>
<feature type="binding site" evidence="1">
    <location>
        <position position="268"/>
    </location>
    <ligand>
        <name>Mg(2+)</name>
        <dbReference type="ChEBI" id="CHEBI:18420"/>
        <label>2</label>
    </ligand>
</feature>
<feature type="binding site" evidence="1">
    <location>
        <position position="268"/>
    </location>
    <ligand>
        <name>Mn(2+)</name>
        <dbReference type="ChEBI" id="CHEBI:29035"/>
        <label>2</label>
    </ligand>
</feature>
<sequence>MKLLMLCREPNLYSCRRLKMTAENAGHKMDILDPNRFLLKIQENRPHFALYYQPNQGTPYLLPDYDAVIPRFGTQSTKMGCSVLTHLAAKNIPCLNNPASFALARDKWLSLQALAAANIAVPVTVFAGQDFQAGSAVEKVSSPTILKTLNGSQGIGVILADRSQSAVSIMETLTLSHIPVLLQDFIGEAGASDIRCFVIGDKVVAAMQRSGQKGEFRANCHRGGITQQITLSDDEKLIAVRAAQALGLDVAGVDLIQSKKGLLVLEVNASPGLEMIEKTSGIDVATQMIAYLEKKIAGL</sequence>
<dbReference type="EC" id="6.3.2.-" evidence="1"/>
<dbReference type="EMBL" id="AE016827">
    <property type="protein sequence ID" value="AAU37364.1"/>
    <property type="molecule type" value="Genomic_DNA"/>
</dbReference>
<dbReference type="RefSeq" id="WP_011199936.1">
    <property type="nucleotide sequence ID" value="NC_006300.1"/>
</dbReference>
<dbReference type="SMR" id="Q65UJ6"/>
<dbReference type="STRING" id="221988.MS0757"/>
<dbReference type="KEGG" id="msu:MS0757"/>
<dbReference type="eggNOG" id="COG0189">
    <property type="taxonomic scope" value="Bacteria"/>
</dbReference>
<dbReference type="HOGENOM" id="CLU_054353_0_1_6"/>
<dbReference type="OrthoDB" id="3865600at2"/>
<dbReference type="Proteomes" id="UP000000607">
    <property type="component" value="Chromosome"/>
</dbReference>
<dbReference type="GO" id="GO:0005737">
    <property type="term" value="C:cytoplasm"/>
    <property type="evidence" value="ECO:0007669"/>
    <property type="project" value="TreeGrafter"/>
</dbReference>
<dbReference type="GO" id="GO:0005524">
    <property type="term" value="F:ATP binding"/>
    <property type="evidence" value="ECO:0007669"/>
    <property type="project" value="UniProtKB-UniRule"/>
</dbReference>
<dbReference type="GO" id="GO:0046872">
    <property type="term" value="F:metal ion binding"/>
    <property type="evidence" value="ECO:0007669"/>
    <property type="project" value="UniProtKB-KW"/>
</dbReference>
<dbReference type="GO" id="GO:0018169">
    <property type="term" value="F:ribosomal S6-glutamic acid ligase activity"/>
    <property type="evidence" value="ECO:0007669"/>
    <property type="project" value="TreeGrafter"/>
</dbReference>
<dbReference type="GO" id="GO:0036211">
    <property type="term" value="P:protein modification process"/>
    <property type="evidence" value="ECO:0007669"/>
    <property type="project" value="InterPro"/>
</dbReference>
<dbReference type="GO" id="GO:0009432">
    <property type="term" value="P:SOS response"/>
    <property type="evidence" value="ECO:0007669"/>
    <property type="project" value="TreeGrafter"/>
</dbReference>
<dbReference type="GO" id="GO:0006412">
    <property type="term" value="P:translation"/>
    <property type="evidence" value="ECO:0007669"/>
    <property type="project" value="UniProtKB-KW"/>
</dbReference>
<dbReference type="FunFam" id="3.30.470.20:FF:000058">
    <property type="entry name" value="Alpha-aminoadipate--LysW ligase LysX protein"/>
    <property type="match status" value="1"/>
</dbReference>
<dbReference type="Gene3D" id="3.40.50.20">
    <property type="match status" value="1"/>
</dbReference>
<dbReference type="Gene3D" id="3.30.1490.20">
    <property type="entry name" value="ATP-grasp fold, A domain"/>
    <property type="match status" value="1"/>
</dbReference>
<dbReference type="Gene3D" id="3.30.470.20">
    <property type="entry name" value="ATP-grasp fold, B domain"/>
    <property type="match status" value="1"/>
</dbReference>
<dbReference type="HAMAP" id="MF_01552">
    <property type="entry name" value="RimK"/>
    <property type="match status" value="1"/>
</dbReference>
<dbReference type="InterPro" id="IPR011761">
    <property type="entry name" value="ATP-grasp"/>
</dbReference>
<dbReference type="InterPro" id="IPR013651">
    <property type="entry name" value="ATP-grasp_RimK-type"/>
</dbReference>
<dbReference type="InterPro" id="IPR013815">
    <property type="entry name" value="ATP_grasp_subdomain_1"/>
</dbReference>
<dbReference type="InterPro" id="IPR023533">
    <property type="entry name" value="RimK"/>
</dbReference>
<dbReference type="InterPro" id="IPR041107">
    <property type="entry name" value="Rimk_N"/>
</dbReference>
<dbReference type="InterPro" id="IPR004666">
    <property type="entry name" value="Rp_bS6_RimK/Lys_biosynth_LsyX"/>
</dbReference>
<dbReference type="NCBIfam" id="TIGR00768">
    <property type="entry name" value="rimK_fam"/>
    <property type="match status" value="1"/>
</dbReference>
<dbReference type="PANTHER" id="PTHR21621:SF7">
    <property type="entry name" value="RIBOSOMAL PROTEIN BS6--L-GLUTAMATE LIGASE"/>
    <property type="match status" value="1"/>
</dbReference>
<dbReference type="PANTHER" id="PTHR21621">
    <property type="entry name" value="RIBOSOMAL PROTEIN S6 MODIFICATION PROTEIN"/>
    <property type="match status" value="1"/>
</dbReference>
<dbReference type="Pfam" id="PF08443">
    <property type="entry name" value="RimK"/>
    <property type="match status" value="1"/>
</dbReference>
<dbReference type="Pfam" id="PF18030">
    <property type="entry name" value="Rimk_N"/>
    <property type="match status" value="1"/>
</dbReference>
<dbReference type="SUPFAM" id="SSF56059">
    <property type="entry name" value="Glutathione synthetase ATP-binding domain-like"/>
    <property type="match status" value="1"/>
</dbReference>
<dbReference type="PROSITE" id="PS50975">
    <property type="entry name" value="ATP_GRASP"/>
    <property type="match status" value="1"/>
</dbReference>
<proteinExistence type="inferred from homology"/>